<accession>B2INP4</accession>
<keyword id="KW-0067">ATP-binding</keyword>
<keyword id="KW-0963">Cytoplasm</keyword>
<keyword id="KW-0227">DNA damage</keyword>
<keyword id="KW-0234">DNA repair</keyword>
<keyword id="KW-0235">DNA replication</keyword>
<keyword id="KW-0238">DNA-binding</keyword>
<keyword id="KW-0547">Nucleotide-binding</keyword>
<keyword id="KW-0742">SOS response</keyword>
<proteinExistence type="inferred from homology"/>
<name>RECF_STRPS</name>
<feature type="chain" id="PRO_1000121163" description="DNA replication and repair protein RecF">
    <location>
        <begin position="1"/>
        <end position="365"/>
    </location>
</feature>
<feature type="binding site" evidence="1">
    <location>
        <begin position="30"/>
        <end position="37"/>
    </location>
    <ligand>
        <name>ATP</name>
        <dbReference type="ChEBI" id="CHEBI:30616"/>
    </ligand>
</feature>
<reference key="1">
    <citation type="journal article" date="2009" name="BMC Genomics">
        <title>Genome evolution driven by host adaptations results in a more virulent and antimicrobial-resistant Streptococcus pneumoniae serotype 14.</title>
        <authorList>
            <person name="Ding F."/>
            <person name="Tang P."/>
            <person name="Hsu M.-H."/>
            <person name="Cui P."/>
            <person name="Hu S."/>
            <person name="Yu J."/>
            <person name="Chiu C.-H."/>
        </authorList>
    </citation>
    <scope>NUCLEOTIDE SEQUENCE [LARGE SCALE GENOMIC DNA]</scope>
    <source>
        <strain>CGSP14</strain>
    </source>
</reference>
<sequence length="365" mass="41882">MWLQHLSLKTFRNYKETKIDFNPKLNVFLGRNAQGKTNMLEAIYFLALTRSHRTQTDKNLIHFDEEQLHLSGLVQKKTGSIPLEIELTQKGRVTKVNHLKQARLSDYVGHMNVVLFAPEDLQLIKGAPSIRRKFIDMELGQIKPIYLSDLTNYNHILKQRNTYLKSAQKIDETFLSVLDDQLVDYGCRVMNHRLDFIKKLESFGRKKHFELSNQIEELSISYQPSVNITDKQNLSESFKIALEKSRSRDLFKKNTGVGPHRDDISFYINGMDASFGSQGQHRSLVLSIKLAEIELMESITTESPILLLDDVMSELDNTRQLKLLETISQSIQTFITTTSLDHLQNLPENLSIFTIQDGKAAVNGN</sequence>
<evidence type="ECO:0000255" key="1">
    <source>
        <dbReference type="HAMAP-Rule" id="MF_00365"/>
    </source>
</evidence>
<protein>
    <recommendedName>
        <fullName evidence="1">DNA replication and repair protein RecF</fullName>
    </recommendedName>
</protein>
<comment type="function">
    <text evidence="1">The RecF protein is involved in DNA metabolism; it is required for DNA replication and normal SOS inducibility. RecF binds preferentially to single-stranded, linear DNA. It also seems to bind ATP.</text>
</comment>
<comment type="subcellular location">
    <subcellularLocation>
        <location evidence="1">Cytoplasm</location>
    </subcellularLocation>
</comment>
<comment type="similarity">
    <text evidence="1">Belongs to the RecF family.</text>
</comment>
<dbReference type="EMBL" id="CP001033">
    <property type="protein sequence ID" value="ACB91445.1"/>
    <property type="molecule type" value="Genomic_DNA"/>
</dbReference>
<dbReference type="RefSeq" id="WP_000266650.1">
    <property type="nucleotide sequence ID" value="NC_010582.1"/>
</dbReference>
<dbReference type="SMR" id="B2INP4"/>
<dbReference type="KEGG" id="spw:SPCG_2193"/>
<dbReference type="HOGENOM" id="CLU_040267_0_1_9"/>
<dbReference type="GO" id="GO:0005737">
    <property type="term" value="C:cytoplasm"/>
    <property type="evidence" value="ECO:0007669"/>
    <property type="project" value="UniProtKB-SubCell"/>
</dbReference>
<dbReference type="GO" id="GO:0005524">
    <property type="term" value="F:ATP binding"/>
    <property type="evidence" value="ECO:0007669"/>
    <property type="project" value="UniProtKB-UniRule"/>
</dbReference>
<dbReference type="GO" id="GO:0003697">
    <property type="term" value="F:single-stranded DNA binding"/>
    <property type="evidence" value="ECO:0007669"/>
    <property type="project" value="UniProtKB-UniRule"/>
</dbReference>
<dbReference type="GO" id="GO:0006260">
    <property type="term" value="P:DNA replication"/>
    <property type="evidence" value="ECO:0007669"/>
    <property type="project" value="UniProtKB-UniRule"/>
</dbReference>
<dbReference type="GO" id="GO:0000731">
    <property type="term" value="P:DNA synthesis involved in DNA repair"/>
    <property type="evidence" value="ECO:0007669"/>
    <property type="project" value="TreeGrafter"/>
</dbReference>
<dbReference type="GO" id="GO:0006302">
    <property type="term" value="P:double-strand break repair"/>
    <property type="evidence" value="ECO:0007669"/>
    <property type="project" value="TreeGrafter"/>
</dbReference>
<dbReference type="GO" id="GO:0009432">
    <property type="term" value="P:SOS response"/>
    <property type="evidence" value="ECO:0007669"/>
    <property type="project" value="UniProtKB-UniRule"/>
</dbReference>
<dbReference type="CDD" id="cd03242">
    <property type="entry name" value="ABC_RecF"/>
    <property type="match status" value="1"/>
</dbReference>
<dbReference type="FunFam" id="1.20.1050.90:FF:000002">
    <property type="entry name" value="DNA replication and repair protein RecF"/>
    <property type="match status" value="1"/>
</dbReference>
<dbReference type="Gene3D" id="3.40.50.300">
    <property type="entry name" value="P-loop containing nucleotide triphosphate hydrolases"/>
    <property type="match status" value="1"/>
</dbReference>
<dbReference type="Gene3D" id="1.20.1050.90">
    <property type="entry name" value="RecF/RecN/SMC, N-terminal domain"/>
    <property type="match status" value="1"/>
</dbReference>
<dbReference type="HAMAP" id="MF_00365">
    <property type="entry name" value="RecF"/>
    <property type="match status" value="1"/>
</dbReference>
<dbReference type="InterPro" id="IPR001238">
    <property type="entry name" value="DNA-binding_RecF"/>
</dbReference>
<dbReference type="InterPro" id="IPR018078">
    <property type="entry name" value="DNA-binding_RecF_CS"/>
</dbReference>
<dbReference type="InterPro" id="IPR027417">
    <property type="entry name" value="P-loop_NTPase"/>
</dbReference>
<dbReference type="InterPro" id="IPR003395">
    <property type="entry name" value="RecF/RecN/SMC_N"/>
</dbReference>
<dbReference type="InterPro" id="IPR042174">
    <property type="entry name" value="RecF_2"/>
</dbReference>
<dbReference type="NCBIfam" id="TIGR00611">
    <property type="entry name" value="recf"/>
    <property type="match status" value="1"/>
</dbReference>
<dbReference type="PANTHER" id="PTHR32182">
    <property type="entry name" value="DNA REPLICATION AND REPAIR PROTEIN RECF"/>
    <property type="match status" value="1"/>
</dbReference>
<dbReference type="PANTHER" id="PTHR32182:SF0">
    <property type="entry name" value="DNA REPLICATION AND REPAIR PROTEIN RECF"/>
    <property type="match status" value="1"/>
</dbReference>
<dbReference type="Pfam" id="PF02463">
    <property type="entry name" value="SMC_N"/>
    <property type="match status" value="1"/>
</dbReference>
<dbReference type="SUPFAM" id="SSF52540">
    <property type="entry name" value="P-loop containing nucleoside triphosphate hydrolases"/>
    <property type="match status" value="1"/>
</dbReference>
<dbReference type="PROSITE" id="PS00617">
    <property type="entry name" value="RECF_1"/>
    <property type="match status" value="1"/>
</dbReference>
<dbReference type="PROSITE" id="PS00618">
    <property type="entry name" value="RECF_2"/>
    <property type="match status" value="1"/>
</dbReference>
<organism>
    <name type="scientific">Streptococcus pneumoniae (strain CGSP14)</name>
    <dbReference type="NCBI Taxonomy" id="516950"/>
    <lineage>
        <taxon>Bacteria</taxon>
        <taxon>Bacillati</taxon>
        <taxon>Bacillota</taxon>
        <taxon>Bacilli</taxon>
        <taxon>Lactobacillales</taxon>
        <taxon>Streptococcaceae</taxon>
        <taxon>Streptococcus</taxon>
    </lineage>
</organism>
<gene>
    <name evidence="1" type="primary">recF</name>
    <name type="ordered locus">SPCG_2193</name>
</gene>